<comment type="function">
    <text evidence="1">Binds 16S rRNA, required for the assembly of 30S particles and may also be responsible for determining the conformation of the 16S rRNA at the A site.</text>
</comment>
<comment type="subunit">
    <text evidence="1">Part of the 30S ribosomal subunit. Contacts proteins S3 and S10.</text>
</comment>
<comment type="similarity">
    <text evidence="1">Belongs to the universal ribosomal protein uS14 family.</text>
</comment>
<dbReference type="EMBL" id="CP001032">
    <property type="protein sequence ID" value="ACB73504.1"/>
    <property type="molecule type" value="Genomic_DNA"/>
</dbReference>
<dbReference type="RefSeq" id="WP_012373042.1">
    <property type="nucleotide sequence ID" value="NC_010571.1"/>
</dbReference>
<dbReference type="SMR" id="B1ZND5"/>
<dbReference type="STRING" id="452637.Oter_0213"/>
<dbReference type="KEGG" id="ote:Oter_0213"/>
<dbReference type="eggNOG" id="COG0199">
    <property type="taxonomic scope" value="Bacteria"/>
</dbReference>
<dbReference type="HOGENOM" id="CLU_139869_0_1_0"/>
<dbReference type="OrthoDB" id="9810484at2"/>
<dbReference type="Proteomes" id="UP000007013">
    <property type="component" value="Chromosome"/>
</dbReference>
<dbReference type="GO" id="GO:0005737">
    <property type="term" value="C:cytoplasm"/>
    <property type="evidence" value="ECO:0007669"/>
    <property type="project" value="UniProtKB-ARBA"/>
</dbReference>
<dbReference type="GO" id="GO:0015935">
    <property type="term" value="C:small ribosomal subunit"/>
    <property type="evidence" value="ECO:0007669"/>
    <property type="project" value="TreeGrafter"/>
</dbReference>
<dbReference type="GO" id="GO:0019843">
    <property type="term" value="F:rRNA binding"/>
    <property type="evidence" value="ECO:0007669"/>
    <property type="project" value="UniProtKB-UniRule"/>
</dbReference>
<dbReference type="GO" id="GO:0003735">
    <property type="term" value="F:structural constituent of ribosome"/>
    <property type="evidence" value="ECO:0007669"/>
    <property type="project" value="InterPro"/>
</dbReference>
<dbReference type="GO" id="GO:0006412">
    <property type="term" value="P:translation"/>
    <property type="evidence" value="ECO:0007669"/>
    <property type="project" value="UniProtKB-UniRule"/>
</dbReference>
<dbReference type="FunFam" id="1.10.287.1480:FF:000001">
    <property type="entry name" value="30S ribosomal protein S14"/>
    <property type="match status" value="1"/>
</dbReference>
<dbReference type="Gene3D" id="1.10.287.1480">
    <property type="match status" value="1"/>
</dbReference>
<dbReference type="HAMAP" id="MF_00537">
    <property type="entry name" value="Ribosomal_uS14_1"/>
    <property type="match status" value="1"/>
</dbReference>
<dbReference type="InterPro" id="IPR001209">
    <property type="entry name" value="Ribosomal_uS14"/>
</dbReference>
<dbReference type="InterPro" id="IPR023036">
    <property type="entry name" value="Ribosomal_uS14_bac/plastid"/>
</dbReference>
<dbReference type="InterPro" id="IPR018271">
    <property type="entry name" value="Ribosomal_uS14_CS"/>
</dbReference>
<dbReference type="NCBIfam" id="NF006477">
    <property type="entry name" value="PRK08881.1"/>
    <property type="match status" value="1"/>
</dbReference>
<dbReference type="PANTHER" id="PTHR19836">
    <property type="entry name" value="30S RIBOSOMAL PROTEIN S14"/>
    <property type="match status" value="1"/>
</dbReference>
<dbReference type="PANTHER" id="PTHR19836:SF19">
    <property type="entry name" value="SMALL RIBOSOMAL SUBUNIT PROTEIN US14M"/>
    <property type="match status" value="1"/>
</dbReference>
<dbReference type="Pfam" id="PF00253">
    <property type="entry name" value="Ribosomal_S14"/>
    <property type="match status" value="1"/>
</dbReference>
<dbReference type="SUPFAM" id="SSF57716">
    <property type="entry name" value="Glucocorticoid receptor-like (DNA-binding domain)"/>
    <property type="match status" value="1"/>
</dbReference>
<dbReference type="PROSITE" id="PS00527">
    <property type="entry name" value="RIBOSOMAL_S14"/>
    <property type="match status" value="1"/>
</dbReference>
<keyword id="KW-1185">Reference proteome</keyword>
<keyword id="KW-0687">Ribonucleoprotein</keyword>
<keyword id="KW-0689">Ribosomal protein</keyword>
<keyword id="KW-0694">RNA-binding</keyword>
<keyword id="KW-0699">rRNA-binding</keyword>
<proteinExistence type="inferred from homology"/>
<name>RS14_OPITP</name>
<protein>
    <recommendedName>
        <fullName evidence="1">Small ribosomal subunit protein uS14</fullName>
    </recommendedName>
    <alternativeName>
        <fullName evidence="2">30S ribosomal protein S14</fullName>
    </alternativeName>
</protein>
<evidence type="ECO:0000255" key="1">
    <source>
        <dbReference type="HAMAP-Rule" id="MF_00537"/>
    </source>
</evidence>
<evidence type="ECO:0000305" key="2"/>
<organism>
    <name type="scientific">Opitutus terrae (strain DSM 11246 / JCM 15787 / PB90-1)</name>
    <dbReference type="NCBI Taxonomy" id="452637"/>
    <lineage>
        <taxon>Bacteria</taxon>
        <taxon>Pseudomonadati</taxon>
        <taxon>Verrucomicrobiota</taxon>
        <taxon>Opitutia</taxon>
        <taxon>Opitutales</taxon>
        <taxon>Opitutaceae</taxon>
        <taxon>Opitutus</taxon>
    </lineage>
</organism>
<accession>B1ZND5</accession>
<feature type="chain" id="PRO_1000128475" description="Small ribosomal subunit protein uS14">
    <location>
        <begin position="1"/>
        <end position="101"/>
    </location>
</feature>
<reference key="1">
    <citation type="journal article" date="2011" name="J. Bacteriol.">
        <title>Genome sequence of the verrucomicrobium Opitutus terrae PB90-1, an abundant inhabitant of rice paddy soil ecosystems.</title>
        <authorList>
            <person name="van Passel M.W."/>
            <person name="Kant R."/>
            <person name="Palva A."/>
            <person name="Copeland A."/>
            <person name="Lucas S."/>
            <person name="Lapidus A."/>
            <person name="Glavina del Rio T."/>
            <person name="Pitluck S."/>
            <person name="Goltsman E."/>
            <person name="Clum A."/>
            <person name="Sun H."/>
            <person name="Schmutz J."/>
            <person name="Larimer F.W."/>
            <person name="Land M.L."/>
            <person name="Hauser L."/>
            <person name="Kyrpides N."/>
            <person name="Mikhailova N."/>
            <person name="Richardson P.P."/>
            <person name="Janssen P.H."/>
            <person name="de Vos W.M."/>
            <person name="Smidt H."/>
        </authorList>
    </citation>
    <scope>NUCLEOTIDE SEQUENCE [LARGE SCALE GENOMIC DNA]</scope>
    <source>
        <strain>DSM 11246 / JCM 15787 / PB90-1</strain>
    </source>
</reference>
<sequence>MPKTSAIERNKKRIRLAAQHAAKRAELKAILANPATTDDEFFGAQKKLQKLPKNSNKIRIRNRCSLSGRPRAYIGKFGVSRIQFRELALAGKIPGVTKSSW</sequence>
<gene>
    <name evidence="1" type="primary">rpsN</name>
    <name type="ordered locus">Oter_0213</name>
</gene>